<organism>
    <name type="scientific">Nicotiana plumbaginifolia</name>
    <name type="common">Leadwort-leaved tobacco</name>
    <name type="synonym">Tex-Mex tobacco</name>
    <dbReference type="NCBI Taxonomy" id="4092"/>
    <lineage>
        <taxon>Eukaryota</taxon>
        <taxon>Viridiplantae</taxon>
        <taxon>Streptophyta</taxon>
        <taxon>Embryophyta</taxon>
        <taxon>Tracheophyta</taxon>
        <taxon>Spermatophyta</taxon>
        <taxon>Magnoliopsida</taxon>
        <taxon>eudicotyledons</taxon>
        <taxon>Gunneridae</taxon>
        <taxon>Pentapetalae</taxon>
        <taxon>asterids</taxon>
        <taxon>lamiids</taxon>
        <taxon>Solanales</taxon>
        <taxon>Solanaceae</taxon>
        <taxon>Nicotianoideae</taxon>
        <taxon>Nicotianeae</taxon>
        <taxon>Nicotiana</taxon>
    </lineage>
</organism>
<evidence type="ECO:0000255" key="1"/>
<evidence type="ECO:0000255" key="2">
    <source>
        <dbReference type="PROSITE-ProRule" id="PRU00176"/>
    </source>
</evidence>
<evidence type="ECO:0000256" key="3">
    <source>
        <dbReference type="SAM" id="MobiDB-lite"/>
    </source>
</evidence>
<sequence length="279" mass="30462">MASSASSLHFLSLTPQTLLLPKPTSQTTSLSFFSLPPSSLNLSLSSPSSCFSSRFVRKVTLPDFDQIEDVEDGDEGVEEERNFSPDLKIFVGNLLFSADSAALAELFERAGNVEMVEVIYDKLTGRSRGFGFVTMSSKEEVEAACQQFNGYELDGRALRVNSGPPPEKRENSSFRENSSFRGGSRGGGSFDSSNRVYVGNLAWGVDQDALETLFSEQGKVVDAKVVYDRDSGRSRGFGFVTYSSAEEVNNAIESLDGVDLNGRAIRVSPAEARPPRRQF</sequence>
<name>ROC1_NICPL</name>
<keyword id="KW-0150">Chloroplast</keyword>
<keyword id="KW-0507">mRNA processing</keyword>
<keyword id="KW-0934">Plastid</keyword>
<keyword id="KW-0677">Repeat</keyword>
<keyword id="KW-0687">Ribonucleoprotein</keyword>
<keyword id="KW-0694">RNA-binding</keyword>
<keyword id="KW-0809">Transit peptide</keyword>
<proteinExistence type="evidence at transcript level"/>
<dbReference type="EMBL" id="X65118">
    <property type="protein sequence ID" value="CAA46234.1"/>
    <property type="molecule type" value="mRNA"/>
</dbReference>
<dbReference type="PIR" id="S26203">
    <property type="entry name" value="S26203"/>
</dbReference>
<dbReference type="SMR" id="P49313"/>
<dbReference type="GO" id="GO:0009535">
    <property type="term" value="C:chloroplast thylakoid membrane"/>
    <property type="evidence" value="ECO:0007669"/>
    <property type="project" value="TreeGrafter"/>
</dbReference>
<dbReference type="GO" id="GO:1990904">
    <property type="term" value="C:ribonucleoprotein complex"/>
    <property type="evidence" value="ECO:0007669"/>
    <property type="project" value="UniProtKB-KW"/>
</dbReference>
<dbReference type="GO" id="GO:0003729">
    <property type="term" value="F:mRNA binding"/>
    <property type="evidence" value="ECO:0007669"/>
    <property type="project" value="TreeGrafter"/>
</dbReference>
<dbReference type="GO" id="GO:1901259">
    <property type="term" value="P:chloroplast rRNA processing"/>
    <property type="evidence" value="ECO:0007669"/>
    <property type="project" value="TreeGrafter"/>
</dbReference>
<dbReference type="GO" id="GO:0006397">
    <property type="term" value="P:mRNA processing"/>
    <property type="evidence" value="ECO:0007669"/>
    <property type="project" value="UniProtKB-KW"/>
</dbReference>
<dbReference type="CDD" id="cd21608">
    <property type="entry name" value="RRM2_NsCP33_like"/>
    <property type="match status" value="1"/>
</dbReference>
<dbReference type="FunFam" id="3.30.70.330:FF:000361">
    <property type="entry name" value="28 kDa ribonucleoprotein, chloroplastic"/>
    <property type="match status" value="1"/>
</dbReference>
<dbReference type="Gene3D" id="3.30.70.330">
    <property type="match status" value="2"/>
</dbReference>
<dbReference type="InterPro" id="IPR050502">
    <property type="entry name" value="Euk_RNA-bind_prot"/>
</dbReference>
<dbReference type="InterPro" id="IPR012677">
    <property type="entry name" value="Nucleotide-bd_a/b_plait_sf"/>
</dbReference>
<dbReference type="InterPro" id="IPR035979">
    <property type="entry name" value="RBD_domain_sf"/>
</dbReference>
<dbReference type="InterPro" id="IPR048289">
    <property type="entry name" value="RRM2_NsCP33-like"/>
</dbReference>
<dbReference type="InterPro" id="IPR000504">
    <property type="entry name" value="RRM_dom"/>
</dbReference>
<dbReference type="PANTHER" id="PTHR48025">
    <property type="entry name" value="OS02G0815200 PROTEIN"/>
    <property type="match status" value="1"/>
</dbReference>
<dbReference type="PANTHER" id="PTHR48025:SF1">
    <property type="entry name" value="RRM DOMAIN-CONTAINING PROTEIN"/>
    <property type="match status" value="1"/>
</dbReference>
<dbReference type="Pfam" id="PF00076">
    <property type="entry name" value="RRM_1"/>
    <property type="match status" value="2"/>
</dbReference>
<dbReference type="SMART" id="SM00360">
    <property type="entry name" value="RRM"/>
    <property type="match status" value="2"/>
</dbReference>
<dbReference type="SUPFAM" id="SSF54928">
    <property type="entry name" value="RNA-binding domain, RBD"/>
    <property type="match status" value="2"/>
</dbReference>
<dbReference type="PROSITE" id="PS50102">
    <property type="entry name" value="RRM"/>
    <property type="match status" value="2"/>
</dbReference>
<comment type="function">
    <text>Could be involved in splicing and/or processing of chloroplast RNA's.</text>
</comment>
<comment type="subcellular location">
    <subcellularLocation>
        <location>Plastid</location>
        <location>Chloroplast</location>
    </subcellularLocation>
</comment>
<comment type="tissue specificity">
    <text>Expressed at high levels in the leaves and seedlings, and lower levels are seen in the stems and roots.</text>
</comment>
<accession>P49313</accession>
<protein>
    <recommendedName>
        <fullName>30 kDa ribonucleoprotein, chloroplastic</fullName>
    </recommendedName>
    <alternativeName>
        <fullName>CP-RBP30</fullName>
    </alternativeName>
</protein>
<reference key="1">
    <citation type="journal article" date="1992" name="Mol. Gen. Genet.">
        <title>Multiple plant RNA binding proteins identified by PCR: expression of cDNAs encoding RNA binding proteins targeted to chloroplasts in Nicotiana plumbaginifolia.</title>
        <authorList>
            <person name="Mieszczak M."/>
            <person name="Klahre U."/>
            <person name="Levy J.H."/>
            <person name="Goodall G.J."/>
            <person name="Filipowicz W."/>
        </authorList>
    </citation>
    <scope>NUCLEOTIDE SEQUENCE [MRNA]</scope>
    <source>
        <tissue>Leaf</tissue>
    </source>
</reference>
<feature type="transit peptide" description="Chloroplast" evidence="1">
    <location>
        <begin position="1"/>
        <end status="unknown"/>
    </location>
</feature>
<feature type="chain" id="PRO_0000031024" description="30 kDa ribonucleoprotein, chloroplastic">
    <location>
        <begin status="unknown"/>
        <end position="279"/>
    </location>
</feature>
<feature type="domain" description="RRM 1" evidence="2">
    <location>
        <begin position="87"/>
        <end position="165"/>
    </location>
</feature>
<feature type="domain" description="RRM 2" evidence="2">
    <location>
        <begin position="194"/>
        <end position="272"/>
    </location>
</feature>
<feature type="region of interest" description="Disordered" evidence="3">
    <location>
        <begin position="156"/>
        <end position="187"/>
    </location>
</feature>
<feature type="region of interest" description="Linker (Gly-rich)">
    <location>
        <begin position="166"/>
        <end position="193"/>
    </location>
</feature>